<keyword id="KW-1185">Reference proteome</keyword>
<keyword id="KW-0687">Ribonucleoprotein</keyword>
<keyword id="KW-0689">Ribosomal protein</keyword>
<keyword id="KW-0694">RNA-binding</keyword>
<keyword id="KW-0699">rRNA-binding</keyword>
<sequence>MAKASTSGASRVRKKVKKNVSDGIAHVHASFNNTIITITDRQGNALSWATSGGAGFKGSRKSTPFAAQVAAETAGRVAMEYGIKTLEVRIKGPGPGRESSVRALNALGIKISSIADITPVPHNGCRPPKRRRI</sequence>
<dbReference type="EMBL" id="BX640422">
    <property type="protein sequence ID" value="CAE43897.1"/>
    <property type="molecule type" value="Genomic_DNA"/>
</dbReference>
<dbReference type="RefSeq" id="NP_882149.1">
    <property type="nucleotide sequence ID" value="NC_002929.2"/>
</dbReference>
<dbReference type="RefSeq" id="WP_003806930.1">
    <property type="nucleotide sequence ID" value="NZ_CP039022.1"/>
</dbReference>
<dbReference type="SMR" id="Q7VTA7"/>
<dbReference type="STRING" id="257313.BP3640"/>
<dbReference type="PaxDb" id="257313-BP3640"/>
<dbReference type="GeneID" id="93206285"/>
<dbReference type="KEGG" id="bpe:BP3640"/>
<dbReference type="PATRIC" id="fig|257313.5.peg.3937"/>
<dbReference type="eggNOG" id="COG0100">
    <property type="taxonomic scope" value="Bacteria"/>
</dbReference>
<dbReference type="HOGENOM" id="CLU_072439_5_0_4"/>
<dbReference type="Proteomes" id="UP000002676">
    <property type="component" value="Chromosome"/>
</dbReference>
<dbReference type="GO" id="GO:1990904">
    <property type="term" value="C:ribonucleoprotein complex"/>
    <property type="evidence" value="ECO:0007669"/>
    <property type="project" value="UniProtKB-KW"/>
</dbReference>
<dbReference type="GO" id="GO:0005840">
    <property type="term" value="C:ribosome"/>
    <property type="evidence" value="ECO:0007669"/>
    <property type="project" value="UniProtKB-KW"/>
</dbReference>
<dbReference type="GO" id="GO:0019843">
    <property type="term" value="F:rRNA binding"/>
    <property type="evidence" value="ECO:0007669"/>
    <property type="project" value="UniProtKB-UniRule"/>
</dbReference>
<dbReference type="GO" id="GO:0003735">
    <property type="term" value="F:structural constituent of ribosome"/>
    <property type="evidence" value="ECO:0007669"/>
    <property type="project" value="InterPro"/>
</dbReference>
<dbReference type="GO" id="GO:0006412">
    <property type="term" value="P:translation"/>
    <property type="evidence" value="ECO:0007669"/>
    <property type="project" value="UniProtKB-UniRule"/>
</dbReference>
<dbReference type="FunFam" id="3.30.420.80:FF:000001">
    <property type="entry name" value="30S ribosomal protein S11"/>
    <property type="match status" value="1"/>
</dbReference>
<dbReference type="Gene3D" id="3.30.420.80">
    <property type="entry name" value="Ribosomal protein S11"/>
    <property type="match status" value="1"/>
</dbReference>
<dbReference type="HAMAP" id="MF_01310">
    <property type="entry name" value="Ribosomal_uS11"/>
    <property type="match status" value="1"/>
</dbReference>
<dbReference type="InterPro" id="IPR001971">
    <property type="entry name" value="Ribosomal_uS11"/>
</dbReference>
<dbReference type="InterPro" id="IPR019981">
    <property type="entry name" value="Ribosomal_uS11_bac-type"/>
</dbReference>
<dbReference type="InterPro" id="IPR018102">
    <property type="entry name" value="Ribosomal_uS11_CS"/>
</dbReference>
<dbReference type="InterPro" id="IPR036967">
    <property type="entry name" value="Ribosomal_uS11_sf"/>
</dbReference>
<dbReference type="NCBIfam" id="NF003698">
    <property type="entry name" value="PRK05309.1"/>
    <property type="match status" value="1"/>
</dbReference>
<dbReference type="NCBIfam" id="TIGR03632">
    <property type="entry name" value="uS11_bact"/>
    <property type="match status" value="1"/>
</dbReference>
<dbReference type="PANTHER" id="PTHR11759">
    <property type="entry name" value="40S RIBOSOMAL PROTEIN S14/30S RIBOSOMAL PROTEIN S11"/>
    <property type="match status" value="1"/>
</dbReference>
<dbReference type="Pfam" id="PF00411">
    <property type="entry name" value="Ribosomal_S11"/>
    <property type="match status" value="1"/>
</dbReference>
<dbReference type="PIRSF" id="PIRSF002131">
    <property type="entry name" value="Ribosomal_S11"/>
    <property type="match status" value="1"/>
</dbReference>
<dbReference type="SUPFAM" id="SSF53137">
    <property type="entry name" value="Translational machinery components"/>
    <property type="match status" value="1"/>
</dbReference>
<dbReference type="PROSITE" id="PS00054">
    <property type="entry name" value="RIBOSOMAL_S11"/>
    <property type="match status" value="1"/>
</dbReference>
<feature type="chain" id="PRO_0000123116" description="Small ribosomal subunit protein uS11">
    <location>
        <begin position="1"/>
        <end position="133"/>
    </location>
</feature>
<evidence type="ECO:0000255" key="1">
    <source>
        <dbReference type="HAMAP-Rule" id="MF_01310"/>
    </source>
</evidence>
<evidence type="ECO:0000305" key="2"/>
<protein>
    <recommendedName>
        <fullName evidence="1">Small ribosomal subunit protein uS11</fullName>
    </recommendedName>
    <alternativeName>
        <fullName evidence="2">30S ribosomal protein S11</fullName>
    </alternativeName>
</protein>
<proteinExistence type="inferred from homology"/>
<organism>
    <name type="scientific">Bordetella pertussis (strain Tohama I / ATCC BAA-589 / NCTC 13251)</name>
    <dbReference type="NCBI Taxonomy" id="257313"/>
    <lineage>
        <taxon>Bacteria</taxon>
        <taxon>Pseudomonadati</taxon>
        <taxon>Pseudomonadota</taxon>
        <taxon>Betaproteobacteria</taxon>
        <taxon>Burkholderiales</taxon>
        <taxon>Alcaligenaceae</taxon>
        <taxon>Bordetella</taxon>
    </lineage>
</organism>
<reference key="1">
    <citation type="journal article" date="2003" name="Nat. Genet.">
        <title>Comparative analysis of the genome sequences of Bordetella pertussis, Bordetella parapertussis and Bordetella bronchiseptica.</title>
        <authorList>
            <person name="Parkhill J."/>
            <person name="Sebaihia M."/>
            <person name="Preston A."/>
            <person name="Murphy L.D."/>
            <person name="Thomson N.R."/>
            <person name="Harris D.E."/>
            <person name="Holden M.T.G."/>
            <person name="Churcher C.M."/>
            <person name="Bentley S.D."/>
            <person name="Mungall K.L."/>
            <person name="Cerdeno-Tarraga A.-M."/>
            <person name="Temple L."/>
            <person name="James K.D."/>
            <person name="Harris B."/>
            <person name="Quail M.A."/>
            <person name="Achtman M."/>
            <person name="Atkin R."/>
            <person name="Baker S."/>
            <person name="Basham D."/>
            <person name="Bason N."/>
            <person name="Cherevach I."/>
            <person name="Chillingworth T."/>
            <person name="Collins M."/>
            <person name="Cronin A."/>
            <person name="Davis P."/>
            <person name="Doggett J."/>
            <person name="Feltwell T."/>
            <person name="Goble A."/>
            <person name="Hamlin N."/>
            <person name="Hauser H."/>
            <person name="Holroyd S."/>
            <person name="Jagels K."/>
            <person name="Leather S."/>
            <person name="Moule S."/>
            <person name="Norberczak H."/>
            <person name="O'Neil S."/>
            <person name="Ormond D."/>
            <person name="Price C."/>
            <person name="Rabbinowitsch E."/>
            <person name="Rutter S."/>
            <person name="Sanders M."/>
            <person name="Saunders D."/>
            <person name="Seeger K."/>
            <person name="Sharp S."/>
            <person name="Simmonds M."/>
            <person name="Skelton J."/>
            <person name="Squares R."/>
            <person name="Squares S."/>
            <person name="Stevens K."/>
            <person name="Unwin L."/>
            <person name="Whitehead S."/>
            <person name="Barrell B.G."/>
            <person name="Maskell D.J."/>
        </authorList>
    </citation>
    <scope>NUCLEOTIDE SEQUENCE [LARGE SCALE GENOMIC DNA]</scope>
    <source>
        <strain>Tohama I / ATCC BAA-589 / NCTC 13251</strain>
    </source>
</reference>
<name>RS11_BORPE</name>
<comment type="function">
    <text evidence="1">Located on the platform of the 30S subunit, it bridges several disparate RNA helices of the 16S rRNA. Forms part of the Shine-Dalgarno cleft in the 70S ribosome.</text>
</comment>
<comment type="subunit">
    <text evidence="1">Part of the 30S ribosomal subunit. Interacts with proteins S7 and S18. Binds to IF-3.</text>
</comment>
<comment type="similarity">
    <text evidence="1">Belongs to the universal ribosomal protein uS11 family.</text>
</comment>
<gene>
    <name evidence="1" type="primary">rpsK</name>
    <name type="ordered locus">BP3640</name>
</gene>
<accession>Q7VTA7</accession>